<reference key="1">
    <citation type="journal article" date="1993" name="J. Biol. Chem.">
        <title>Primary structure of the gene for glycyl-tRNA synthetase from Bombyx mori.</title>
        <authorList>
            <person name="Nada S."/>
            <person name="Chang P.K."/>
            <person name="Dignam J.D."/>
        </authorList>
    </citation>
    <scope>NUCLEOTIDE SEQUENCE [GENOMIC DNA] (ISOFORM 2)</scope>
    <scope>PARTIAL PROTEIN SEQUENCE</scope>
</reference>
<reference evidence="7" key="2">
    <citation type="submission" date="2005-11" db="EMBL/GenBank/DDBJ databases">
        <title>Blast silkworm EST database for functional genes.</title>
        <authorList>
            <person name="Niu B.L."/>
            <person name="Meng Z.Q."/>
            <person name="Weng H.B."/>
            <person name="Shen W.F."/>
            <person name="He L.H."/>
            <person name="Zheng K.F."/>
            <person name="Ye S.T."/>
            <person name="Lin T.B."/>
            <person name="Chen J.E."/>
        </authorList>
    </citation>
    <scope>NUCLEOTIDE SEQUENCE [LARGE SCALE MRNA] (ISOFORM 1)</scope>
</reference>
<sequence>MRHVLSLVYKCSVFSKQVTVFSNHLRLSHSQQWGSNKLHRKIKIPNPFREIIMADPKIEEILAPLRANVKEQGDLVRKLKEEKAPEIDIKKAVAELKTRKKILEDKELSLAPAEDLFDRAKMEDLIKRRFFYDQSFAIYGGITGQFDFGPMGCALKSNMIHLWKKFFILQEQMLEVECSILTPEPVLKASGHVERFADLMTKDIKTGECFRLDHLIKGHLEKIKSDKNTKIELKAEIEDILIKLDGMNADEMSALMKRFEMKSPISGNDLTPPIEFNLMFNTQIGPSGLVKGFLRPETAQGIFVNFKRLLEFNQGRLPFAAAQIGNSFRNEISPRSGLLRVREFTMCEIEHFCDVKEHPKFESVKNTQSLLYSADNQEQGKPADLTTIGDAVCKGIVNNETLGYFMARIHMYMLAVGIDPKRLRFRQHMGNEMAHYACDCWDAECLSSYGWIECVGCADRSAYDLTQHTKATGIRLAAEKKLPAPKQIEVVEAIANNGRIGKAFKKDSQAINDTLATLDNAALEEMQKELDSNGEYTLITARGEFKLTPSLVNVKKTQKTIHVEEIIPSVIEPSFGVGRILYCILEHNFRMREGDEQRTYFSLPPTVAPMKCVVLPLSGNAEFQPFVRDLSQELITVDVSHKVDDSSGSIGRRYARTDELGVPYAVTVDFDTIKEPHTVTLRERDSMRQVRLPMADVPTVVRDLSNSKILWSDVEQKYPKFEQQETVKGTSV</sequence>
<keyword id="KW-0024">Alternative initiation</keyword>
<keyword id="KW-0030">Aminoacyl-tRNA synthetase</keyword>
<keyword id="KW-0067">ATP-binding</keyword>
<keyword id="KW-0966">Cell projection</keyword>
<keyword id="KW-0963">Cytoplasm</keyword>
<keyword id="KW-0903">Direct protein sequencing</keyword>
<keyword id="KW-0436">Ligase</keyword>
<keyword id="KW-0496">Mitochondrion</keyword>
<keyword id="KW-0547">Nucleotide-binding</keyword>
<keyword id="KW-0648">Protein biosynthesis</keyword>
<keyword id="KW-1185">Reference proteome</keyword>
<keyword id="KW-0808">Transferase</keyword>
<keyword id="KW-0809">Transit peptide</keyword>
<evidence type="ECO:0000250" key="1">
    <source>
        <dbReference type="UniProtKB" id="P41250"/>
    </source>
</evidence>
<evidence type="ECO:0000250" key="2">
    <source>
        <dbReference type="UniProtKB" id="Q9VUK8"/>
    </source>
</evidence>
<evidence type="ECO:0000255" key="3"/>
<evidence type="ECO:0000255" key="4">
    <source>
        <dbReference type="PROSITE-ProRule" id="PRU00531"/>
    </source>
</evidence>
<evidence type="ECO:0000305" key="5"/>
<evidence type="ECO:0000312" key="6">
    <source>
        <dbReference type="EMBL" id="AAA62231.1"/>
    </source>
</evidence>
<evidence type="ECO:0000312" key="7">
    <source>
        <dbReference type="EMBL" id="ABD36382.1"/>
    </source>
</evidence>
<proteinExistence type="evidence at protein level"/>
<gene>
    <name evidence="5" type="primary">GlyRS</name>
</gene>
<protein>
    <recommendedName>
        <fullName>Glycine--tRNA ligase</fullName>
        <ecNumber evidence="1">6.1.1.14</ecNumber>
    </recommendedName>
    <alternativeName>
        <fullName>Diadenosine tetraphosphate synthetase</fullName>
        <shortName>Ap4A synthetase</shortName>
        <ecNumber evidence="1">2.7.7.-</ecNumber>
    </alternativeName>
    <alternativeName>
        <fullName>Glycyl-tRNA synthetase</fullName>
    </alternativeName>
</protein>
<accession>Q04451</accession>
<accession>Q2F5I5</accession>
<name>GARS_BOMMO</name>
<dbReference type="EC" id="6.1.1.14" evidence="1"/>
<dbReference type="EC" id="2.7.7.-" evidence="1"/>
<dbReference type="EMBL" id="L08106">
    <property type="protein sequence ID" value="AAA62231.1"/>
    <property type="molecule type" value="Genomic_DNA"/>
</dbReference>
<dbReference type="EMBL" id="DQ311438">
    <property type="protein sequence ID" value="ABD36382.1"/>
    <property type="molecule type" value="mRNA"/>
</dbReference>
<dbReference type="PIR" id="A46636">
    <property type="entry name" value="A46636"/>
</dbReference>
<dbReference type="SMR" id="Q04451"/>
<dbReference type="FunCoup" id="Q04451">
    <property type="interactions" value="1822"/>
</dbReference>
<dbReference type="STRING" id="7091.Q04451"/>
<dbReference type="BindingDB" id="Q04451"/>
<dbReference type="PaxDb" id="7091-BGIBMGA007637-TA"/>
<dbReference type="GeneID" id="692991"/>
<dbReference type="KEGG" id="bmor:692991"/>
<dbReference type="eggNOG" id="KOG2298">
    <property type="taxonomic scope" value="Eukaryota"/>
</dbReference>
<dbReference type="HOGENOM" id="CLU_015515_1_2_1"/>
<dbReference type="InParanoid" id="Q04451"/>
<dbReference type="OrthoDB" id="194923at7088"/>
<dbReference type="Proteomes" id="UP000005204">
    <property type="component" value="Unassembled WGS sequence"/>
</dbReference>
<dbReference type="GO" id="GO:0030424">
    <property type="term" value="C:axon"/>
    <property type="evidence" value="ECO:0007669"/>
    <property type="project" value="UniProtKB-SubCell"/>
</dbReference>
<dbReference type="GO" id="GO:0005739">
    <property type="term" value="C:mitochondrion"/>
    <property type="evidence" value="ECO:0007669"/>
    <property type="project" value="UniProtKB-SubCell"/>
</dbReference>
<dbReference type="GO" id="GO:0005524">
    <property type="term" value="F:ATP binding"/>
    <property type="evidence" value="ECO:0007669"/>
    <property type="project" value="UniProtKB-KW"/>
</dbReference>
<dbReference type="GO" id="GO:0141192">
    <property type="term" value="F:ATP:ATP adenylyltransferase activity"/>
    <property type="evidence" value="ECO:0007669"/>
    <property type="project" value="RHEA"/>
</dbReference>
<dbReference type="GO" id="GO:0004820">
    <property type="term" value="F:glycine-tRNA ligase activity"/>
    <property type="evidence" value="ECO:0000250"/>
    <property type="project" value="UniProtKB"/>
</dbReference>
<dbReference type="GO" id="GO:0046983">
    <property type="term" value="F:protein dimerization activity"/>
    <property type="evidence" value="ECO:0000250"/>
    <property type="project" value="UniProtKB"/>
</dbReference>
<dbReference type="GO" id="GO:0015966">
    <property type="term" value="P:diadenosine tetraphosphate biosynthetic process"/>
    <property type="evidence" value="ECO:0000250"/>
    <property type="project" value="UniProtKB"/>
</dbReference>
<dbReference type="GO" id="GO:0070150">
    <property type="term" value="P:mitochondrial glycyl-tRNA aminoacylation"/>
    <property type="evidence" value="ECO:0007669"/>
    <property type="project" value="TreeGrafter"/>
</dbReference>
<dbReference type="CDD" id="cd00774">
    <property type="entry name" value="GlyRS-like_core"/>
    <property type="match status" value="1"/>
</dbReference>
<dbReference type="CDD" id="cd00858">
    <property type="entry name" value="GlyRS_anticodon"/>
    <property type="match status" value="1"/>
</dbReference>
<dbReference type="CDD" id="cd00935">
    <property type="entry name" value="GlyRS_RNA"/>
    <property type="match status" value="1"/>
</dbReference>
<dbReference type="FunFam" id="3.30.40.230:FF:000001">
    <property type="entry name" value="Glycine--tRNA ligase"/>
    <property type="match status" value="1"/>
</dbReference>
<dbReference type="FunFam" id="3.30.720.200:FF:000001">
    <property type="entry name" value="Glycine--tRNA ligase 2"/>
    <property type="match status" value="1"/>
</dbReference>
<dbReference type="FunFam" id="3.40.50.800:FF:000004">
    <property type="entry name" value="Glycine--tRNA ligase 2"/>
    <property type="match status" value="1"/>
</dbReference>
<dbReference type="FunFam" id="1.10.287.10:FF:000007">
    <property type="entry name" value="Glycyl-tRNA synthetase"/>
    <property type="match status" value="1"/>
</dbReference>
<dbReference type="FunFam" id="3.30.930.10:FF:000158">
    <property type="entry name" value="Glycyl-tRNA synthetase"/>
    <property type="match status" value="1"/>
</dbReference>
<dbReference type="FunFam" id="3.30.930.10:FF:000010">
    <property type="entry name" value="Glycyl-tRNA synthetase 1"/>
    <property type="match status" value="1"/>
</dbReference>
<dbReference type="Gene3D" id="3.30.40.230">
    <property type="match status" value="1"/>
</dbReference>
<dbReference type="Gene3D" id="3.30.720.200">
    <property type="match status" value="1"/>
</dbReference>
<dbReference type="Gene3D" id="3.40.50.800">
    <property type="entry name" value="Anticodon-binding domain"/>
    <property type="match status" value="1"/>
</dbReference>
<dbReference type="Gene3D" id="3.30.930.10">
    <property type="entry name" value="Bira Bifunctional Protein, Domain 2"/>
    <property type="match status" value="1"/>
</dbReference>
<dbReference type="Gene3D" id="1.10.287.10">
    <property type="entry name" value="S15/NS1, RNA-binding"/>
    <property type="match status" value="1"/>
</dbReference>
<dbReference type="InterPro" id="IPR002314">
    <property type="entry name" value="aa-tRNA-synt_IIb"/>
</dbReference>
<dbReference type="InterPro" id="IPR006195">
    <property type="entry name" value="aa-tRNA-synth_II"/>
</dbReference>
<dbReference type="InterPro" id="IPR045864">
    <property type="entry name" value="aa-tRNA-synth_II/BPL/LPL"/>
</dbReference>
<dbReference type="InterPro" id="IPR004154">
    <property type="entry name" value="Anticodon-bd"/>
</dbReference>
<dbReference type="InterPro" id="IPR036621">
    <property type="entry name" value="Anticodon-bd_dom_sf"/>
</dbReference>
<dbReference type="InterPro" id="IPR027031">
    <property type="entry name" value="Gly-tRNA_synthase/POLG2"/>
</dbReference>
<dbReference type="InterPro" id="IPR033731">
    <property type="entry name" value="GlyRS-like_core"/>
</dbReference>
<dbReference type="InterPro" id="IPR002315">
    <property type="entry name" value="tRNA-synt_gly"/>
</dbReference>
<dbReference type="InterPro" id="IPR009068">
    <property type="entry name" value="uS15_NS1_RNA-bd_sf"/>
</dbReference>
<dbReference type="InterPro" id="IPR000738">
    <property type="entry name" value="WHEP-TRS_dom"/>
</dbReference>
<dbReference type="NCBIfam" id="TIGR00389">
    <property type="entry name" value="glyS_dimeric"/>
    <property type="match status" value="1"/>
</dbReference>
<dbReference type="NCBIfam" id="NF003211">
    <property type="entry name" value="PRK04173.1"/>
    <property type="match status" value="1"/>
</dbReference>
<dbReference type="PANTHER" id="PTHR10745:SF0">
    <property type="entry name" value="GLYCINE--TRNA LIGASE"/>
    <property type="match status" value="1"/>
</dbReference>
<dbReference type="PANTHER" id="PTHR10745">
    <property type="entry name" value="GLYCYL-TRNA SYNTHETASE/DNA POLYMERASE SUBUNIT GAMMA-2"/>
    <property type="match status" value="1"/>
</dbReference>
<dbReference type="Pfam" id="PF03129">
    <property type="entry name" value="HGTP_anticodon"/>
    <property type="match status" value="1"/>
</dbReference>
<dbReference type="Pfam" id="PF00587">
    <property type="entry name" value="tRNA-synt_2b"/>
    <property type="match status" value="1"/>
</dbReference>
<dbReference type="Pfam" id="PF00458">
    <property type="entry name" value="WHEP-TRS"/>
    <property type="match status" value="1"/>
</dbReference>
<dbReference type="PRINTS" id="PR01043">
    <property type="entry name" value="TRNASYNTHGLY"/>
</dbReference>
<dbReference type="SMART" id="SM00991">
    <property type="entry name" value="WHEP-TRS"/>
    <property type="match status" value="1"/>
</dbReference>
<dbReference type="SUPFAM" id="SSF52954">
    <property type="entry name" value="Class II aaRS ABD-related"/>
    <property type="match status" value="1"/>
</dbReference>
<dbReference type="SUPFAM" id="SSF55681">
    <property type="entry name" value="Class II aaRS and biotin synthetases"/>
    <property type="match status" value="1"/>
</dbReference>
<dbReference type="SUPFAM" id="SSF47060">
    <property type="entry name" value="S15/NS1 RNA-binding domain"/>
    <property type="match status" value="1"/>
</dbReference>
<dbReference type="PROSITE" id="PS50862">
    <property type="entry name" value="AA_TRNA_LIGASE_II"/>
    <property type="match status" value="1"/>
</dbReference>
<dbReference type="PROSITE" id="PS00762">
    <property type="entry name" value="WHEP_TRS_1"/>
    <property type="match status" value="1"/>
</dbReference>
<dbReference type="PROSITE" id="PS51185">
    <property type="entry name" value="WHEP_TRS_2"/>
    <property type="match status" value="1"/>
</dbReference>
<organism>
    <name type="scientific">Bombyx mori</name>
    <name type="common">Silk moth</name>
    <dbReference type="NCBI Taxonomy" id="7091"/>
    <lineage>
        <taxon>Eukaryota</taxon>
        <taxon>Metazoa</taxon>
        <taxon>Ecdysozoa</taxon>
        <taxon>Arthropoda</taxon>
        <taxon>Hexapoda</taxon>
        <taxon>Insecta</taxon>
        <taxon>Pterygota</taxon>
        <taxon>Neoptera</taxon>
        <taxon>Endopterygota</taxon>
        <taxon>Lepidoptera</taxon>
        <taxon>Glossata</taxon>
        <taxon>Ditrysia</taxon>
        <taxon>Bombycoidea</taxon>
        <taxon>Bombycidae</taxon>
        <taxon>Bombycinae</taxon>
        <taxon>Bombyx</taxon>
    </lineage>
</organism>
<comment type="function">
    <text evidence="1 2">Catalyzes the ATP-dependent ligation of glycine to the 3'-end of its cognate tRNA, via the formation of an aminoacyl-adenylate intermediate (Gly-AMP) (By similarity). Also produces diadenosine tetraphosphate (Ap4A), a universal pleiotropic signaling molecule needed for cell regulation pathways, by direct condensation of 2 ATPs (By similarity). Thereby, may play a special role in Ap4A homeostasis (By similarity). Required for terminal arborization of both dendrites and axons during development (By similarity).</text>
</comment>
<comment type="catalytic activity">
    <reaction evidence="1">
        <text>tRNA(Gly) + glycine + ATP = glycyl-tRNA(Gly) + AMP + diphosphate</text>
        <dbReference type="Rhea" id="RHEA:16013"/>
        <dbReference type="Rhea" id="RHEA-COMP:9664"/>
        <dbReference type="Rhea" id="RHEA-COMP:9683"/>
        <dbReference type="ChEBI" id="CHEBI:30616"/>
        <dbReference type="ChEBI" id="CHEBI:33019"/>
        <dbReference type="ChEBI" id="CHEBI:57305"/>
        <dbReference type="ChEBI" id="CHEBI:78442"/>
        <dbReference type="ChEBI" id="CHEBI:78522"/>
        <dbReference type="ChEBI" id="CHEBI:456215"/>
        <dbReference type="EC" id="6.1.1.14"/>
    </reaction>
    <physiologicalReaction direction="left-to-right" evidence="1">
        <dbReference type="Rhea" id="RHEA:16014"/>
    </physiologicalReaction>
</comment>
<comment type="catalytic activity">
    <reaction evidence="1">
        <text>2 ATP + H(+) = P(1),P(4)-bis(5'-adenosyl) tetraphosphate + diphosphate</text>
        <dbReference type="Rhea" id="RHEA:34935"/>
        <dbReference type="ChEBI" id="CHEBI:15378"/>
        <dbReference type="ChEBI" id="CHEBI:30616"/>
        <dbReference type="ChEBI" id="CHEBI:33019"/>
        <dbReference type="ChEBI" id="CHEBI:58141"/>
    </reaction>
    <physiologicalReaction direction="left-to-right" evidence="1">
        <dbReference type="Rhea" id="RHEA:34936"/>
    </physiologicalReaction>
</comment>
<comment type="subunit">
    <text evidence="1">Homodimer.</text>
</comment>
<comment type="subcellular location">
    <molecule>Isoform 1</molecule>
    <subcellularLocation>
        <location evidence="2">Mitochondrion</location>
    </subcellularLocation>
</comment>
<comment type="subcellular location">
    <molecule>Isoform 2</molecule>
    <subcellularLocation>
        <location evidence="2">Cytoplasm</location>
    </subcellularLocation>
    <subcellularLocation>
        <location evidence="2">Cell projection</location>
        <location evidence="2">Axon</location>
    </subcellularLocation>
</comment>
<comment type="alternative products">
    <event type="alternative initiation"/>
    <isoform>
        <id>Q04451-2</id>
        <name evidence="5">1</name>
        <sequence type="displayed"/>
    </isoform>
    <isoform>
        <id>Q04451-1</id>
        <name evidence="5">2</name>
        <sequence type="described" ref="VSP_060971"/>
    </isoform>
</comment>
<comment type="similarity">
    <text evidence="5">Belongs to the class-II aminoacyl-tRNA synthetase family.</text>
</comment>
<feature type="transit peptide" description="Mitochondrion" evidence="3">
    <location>
        <begin position="1"/>
        <end position="27"/>
    </location>
</feature>
<feature type="chain" id="PRO_0000073001" description="Glycine--tRNA ligase" evidence="3">
    <location>
        <begin position="28"/>
        <end position="732"/>
    </location>
</feature>
<feature type="domain" description="WHEP-TRS" evidence="4">
    <location>
        <begin position="61"/>
        <end position="117"/>
    </location>
</feature>
<feature type="binding site" evidence="1">
    <location>
        <position position="297"/>
    </location>
    <ligand>
        <name>glycine</name>
        <dbReference type="ChEBI" id="CHEBI:57305"/>
    </ligand>
</feature>
<feature type="binding site" evidence="1">
    <location>
        <begin position="329"/>
        <end position="331"/>
    </location>
    <ligand>
        <name>ATP</name>
        <dbReference type="ChEBI" id="CHEBI:30616"/>
    </ligand>
</feature>
<feature type="binding site" evidence="1">
    <location>
        <begin position="340"/>
        <end position="341"/>
    </location>
    <ligand>
        <name>ATP</name>
        <dbReference type="ChEBI" id="CHEBI:30616"/>
    </ligand>
</feature>
<feature type="binding site" evidence="1">
    <location>
        <position position="348"/>
    </location>
    <ligand>
        <name>glycine</name>
        <dbReference type="ChEBI" id="CHEBI:57305"/>
    </ligand>
</feature>
<feature type="binding site" evidence="1">
    <location>
        <begin position="453"/>
        <end position="454"/>
    </location>
    <ligand>
        <name>ATP</name>
        <dbReference type="ChEBI" id="CHEBI:30616"/>
    </ligand>
</feature>
<feature type="binding site" evidence="1">
    <location>
        <begin position="572"/>
        <end position="574"/>
    </location>
    <ligand>
        <name>glycine</name>
        <dbReference type="ChEBI" id="CHEBI:57305"/>
    </ligand>
</feature>
<feature type="binding site" evidence="1">
    <location>
        <position position="579"/>
    </location>
    <ligand>
        <name>ATP</name>
        <dbReference type="ChEBI" id="CHEBI:30616"/>
    </ligand>
</feature>
<feature type="splice variant" id="VSP_060971" description="In isoform 2." evidence="6">
    <location>
        <begin position="1"/>
        <end position="52"/>
    </location>
</feature>
<feature type="sequence conflict" description="In Ref. 2; ABD36382." evidence="5" ref="2">
    <original>F</original>
    <variation>L</variation>
    <location>
        <position position="303"/>
    </location>
</feature>
<feature type="sequence conflict" description="In Ref. 2; ABD36382." evidence="5" ref="2">
    <original>S</original>
    <variation>M</variation>
    <location>
        <position position="369"/>
    </location>
</feature>
<feature type="sequence conflict" description="In Ref. 2; ABD36382." evidence="5" ref="2">
    <original>D</original>
    <variation>E</variation>
    <location>
        <position position="384"/>
    </location>
</feature>
<feature type="sequence conflict" description="In Ref. 2; ABD36382." evidence="5" ref="2">
    <original>C</original>
    <variation>S</variation>
    <location>
        <position position="393"/>
    </location>
</feature>
<feature type="sequence conflict" description="In Ref. 2; ABD36382." evidence="5" ref="2">
    <original>NGR</original>
    <variation>KAA</variation>
    <location>
        <begin position="497"/>
        <end position="499"/>
    </location>
</feature>
<feature type="sequence conflict" description="In Ref. 2; ABD36382." evidence="5" ref="2">
    <original>F</original>
    <variation>L</variation>
    <location>
        <position position="721"/>
    </location>
</feature>